<protein>
    <recommendedName>
        <fullName evidence="1">tRNA-specific 2-thiouridylase MnmA</fullName>
        <ecNumber evidence="1">2.8.1.13</ecNumber>
    </recommendedName>
</protein>
<sequence length="359" mass="39887">MANVLVAMSGGVDSSLAAALLQEAGHQVTGVTMHLWDDDEQGLRESLCCAAEAATSARRVCALLGIPFYVFNYQREFRRHVIEYFIRAYTHGLTPNPCVECNRMIKFRALLDRARALGFDAVATGHYARIVRDDCGRYQLWRAVDTEKDQSYMLHMLGQADLARLLFPIGEYTKQQVREMAAARCLPSANREESQDICFVPDGDYRNLLRIEAPESLIPGPIVDLEGREIGRHRGLPLYTVGQRRGLGLGGGEPRYVVAIDPARNALIVGPVEALNRERFIVTDARWVDDAPPAETFHCQVQVRAHAEPLPARVSAQPDGRWLVELERPQRAVSPGQAAVFYDGVRVLGGGWIARPEVG</sequence>
<comment type="function">
    <text evidence="1">Catalyzes the 2-thiolation of uridine at the wobble position (U34) of tRNA, leading to the formation of s(2)U34.</text>
</comment>
<comment type="catalytic activity">
    <reaction evidence="1">
        <text>S-sulfanyl-L-cysteinyl-[protein] + uridine(34) in tRNA + AH2 + ATP = 2-thiouridine(34) in tRNA + L-cysteinyl-[protein] + A + AMP + diphosphate + H(+)</text>
        <dbReference type="Rhea" id="RHEA:47032"/>
        <dbReference type="Rhea" id="RHEA-COMP:10131"/>
        <dbReference type="Rhea" id="RHEA-COMP:11726"/>
        <dbReference type="Rhea" id="RHEA-COMP:11727"/>
        <dbReference type="Rhea" id="RHEA-COMP:11728"/>
        <dbReference type="ChEBI" id="CHEBI:13193"/>
        <dbReference type="ChEBI" id="CHEBI:15378"/>
        <dbReference type="ChEBI" id="CHEBI:17499"/>
        <dbReference type="ChEBI" id="CHEBI:29950"/>
        <dbReference type="ChEBI" id="CHEBI:30616"/>
        <dbReference type="ChEBI" id="CHEBI:33019"/>
        <dbReference type="ChEBI" id="CHEBI:61963"/>
        <dbReference type="ChEBI" id="CHEBI:65315"/>
        <dbReference type="ChEBI" id="CHEBI:87170"/>
        <dbReference type="ChEBI" id="CHEBI:456215"/>
        <dbReference type="EC" id="2.8.1.13"/>
    </reaction>
</comment>
<comment type="subcellular location">
    <subcellularLocation>
        <location evidence="1">Cytoplasm</location>
    </subcellularLocation>
</comment>
<comment type="similarity">
    <text evidence="1">Belongs to the MnmA/TRMU family.</text>
</comment>
<proteinExistence type="inferred from homology"/>
<gene>
    <name evidence="1" type="primary">mnmA</name>
    <name type="ordered locus">Cagg_2794</name>
</gene>
<keyword id="KW-0067">ATP-binding</keyword>
<keyword id="KW-0963">Cytoplasm</keyword>
<keyword id="KW-1015">Disulfide bond</keyword>
<keyword id="KW-0547">Nucleotide-binding</keyword>
<keyword id="KW-0694">RNA-binding</keyword>
<keyword id="KW-0808">Transferase</keyword>
<keyword id="KW-0819">tRNA processing</keyword>
<keyword id="KW-0820">tRNA-binding</keyword>
<organism>
    <name type="scientific">Chloroflexus aggregans (strain MD-66 / DSM 9485)</name>
    <dbReference type="NCBI Taxonomy" id="326427"/>
    <lineage>
        <taxon>Bacteria</taxon>
        <taxon>Bacillati</taxon>
        <taxon>Chloroflexota</taxon>
        <taxon>Chloroflexia</taxon>
        <taxon>Chloroflexales</taxon>
        <taxon>Chloroflexineae</taxon>
        <taxon>Chloroflexaceae</taxon>
        <taxon>Chloroflexus</taxon>
    </lineage>
</organism>
<evidence type="ECO:0000255" key="1">
    <source>
        <dbReference type="HAMAP-Rule" id="MF_00144"/>
    </source>
</evidence>
<dbReference type="EC" id="2.8.1.13" evidence="1"/>
<dbReference type="EMBL" id="CP001337">
    <property type="protein sequence ID" value="ACL25657.1"/>
    <property type="molecule type" value="Genomic_DNA"/>
</dbReference>
<dbReference type="RefSeq" id="WP_015941514.1">
    <property type="nucleotide sequence ID" value="NC_011831.1"/>
</dbReference>
<dbReference type="SMR" id="B8G5F1"/>
<dbReference type="STRING" id="326427.Cagg_2794"/>
<dbReference type="KEGG" id="cag:Cagg_2794"/>
<dbReference type="eggNOG" id="COG0482">
    <property type="taxonomic scope" value="Bacteria"/>
</dbReference>
<dbReference type="HOGENOM" id="CLU_035188_0_0_0"/>
<dbReference type="OrthoDB" id="9800696at2"/>
<dbReference type="Proteomes" id="UP000002508">
    <property type="component" value="Chromosome"/>
</dbReference>
<dbReference type="GO" id="GO:0005737">
    <property type="term" value="C:cytoplasm"/>
    <property type="evidence" value="ECO:0007669"/>
    <property type="project" value="UniProtKB-SubCell"/>
</dbReference>
<dbReference type="GO" id="GO:0005524">
    <property type="term" value="F:ATP binding"/>
    <property type="evidence" value="ECO:0007669"/>
    <property type="project" value="UniProtKB-KW"/>
</dbReference>
<dbReference type="GO" id="GO:0000049">
    <property type="term" value="F:tRNA binding"/>
    <property type="evidence" value="ECO:0007669"/>
    <property type="project" value="UniProtKB-KW"/>
</dbReference>
<dbReference type="GO" id="GO:0103016">
    <property type="term" value="F:tRNA-uridine 2-sulfurtransferase activity"/>
    <property type="evidence" value="ECO:0007669"/>
    <property type="project" value="UniProtKB-EC"/>
</dbReference>
<dbReference type="GO" id="GO:0002143">
    <property type="term" value="P:tRNA wobble position uridine thiolation"/>
    <property type="evidence" value="ECO:0007669"/>
    <property type="project" value="TreeGrafter"/>
</dbReference>
<dbReference type="CDD" id="cd01998">
    <property type="entry name" value="MnmA_TRMU-like"/>
    <property type="match status" value="1"/>
</dbReference>
<dbReference type="FunFam" id="2.30.30.280:FF:000001">
    <property type="entry name" value="tRNA-specific 2-thiouridylase MnmA"/>
    <property type="match status" value="1"/>
</dbReference>
<dbReference type="FunFam" id="2.40.30.10:FF:000127">
    <property type="entry name" value="tRNA-specific 2-thiouridylase MnmA"/>
    <property type="match status" value="1"/>
</dbReference>
<dbReference type="FunFam" id="3.40.50.620:FF:000115">
    <property type="entry name" value="tRNA-specific 2-thiouridylase MnmA"/>
    <property type="match status" value="1"/>
</dbReference>
<dbReference type="Gene3D" id="2.30.30.280">
    <property type="entry name" value="Adenine nucleotide alpha hydrolases-like domains"/>
    <property type="match status" value="1"/>
</dbReference>
<dbReference type="Gene3D" id="3.40.50.620">
    <property type="entry name" value="HUPs"/>
    <property type="match status" value="1"/>
</dbReference>
<dbReference type="Gene3D" id="2.40.30.10">
    <property type="entry name" value="Translation factors"/>
    <property type="match status" value="1"/>
</dbReference>
<dbReference type="HAMAP" id="MF_00144">
    <property type="entry name" value="tRNA_thiouridyl_MnmA"/>
    <property type="match status" value="1"/>
</dbReference>
<dbReference type="InterPro" id="IPR004506">
    <property type="entry name" value="MnmA-like"/>
</dbReference>
<dbReference type="InterPro" id="IPR046885">
    <property type="entry name" value="MnmA-like_C"/>
</dbReference>
<dbReference type="InterPro" id="IPR046884">
    <property type="entry name" value="MnmA-like_central"/>
</dbReference>
<dbReference type="InterPro" id="IPR023382">
    <property type="entry name" value="MnmA-like_central_sf"/>
</dbReference>
<dbReference type="InterPro" id="IPR014729">
    <property type="entry name" value="Rossmann-like_a/b/a_fold"/>
</dbReference>
<dbReference type="NCBIfam" id="NF001138">
    <property type="entry name" value="PRK00143.1"/>
    <property type="match status" value="1"/>
</dbReference>
<dbReference type="NCBIfam" id="TIGR00420">
    <property type="entry name" value="trmU"/>
    <property type="match status" value="1"/>
</dbReference>
<dbReference type="PANTHER" id="PTHR11933:SF5">
    <property type="entry name" value="MITOCHONDRIAL TRNA-SPECIFIC 2-THIOURIDYLASE 1"/>
    <property type="match status" value="1"/>
</dbReference>
<dbReference type="PANTHER" id="PTHR11933">
    <property type="entry name" value="TRNA 5-METHYLAMINOMETHYL-2-THIOURIDYLATE -METHYLTRANSFERASE"/>
    <property type="match status" value="1"/>
</dbReference>
<dbReference type="Pfam" id="PF03054">
    <property type="entry name" value="tRNA_Me_trans"/>
    <property type="match status" value="1"/>
</dbReference>
<dbReference type="Pfam" id="PF20258">
    <property type="entry name" value="tRNA_Me_trans_C"/>
    <property type="match status" value="1"/>
</dbReference>
<dbReference type="Pfam" id="PF20259">
    <property type="entry name" value="tRNA_Me_trans_M"/>
    <property type="match status" value="1"/>
</dbReference>
<dbReference type="SUPFAM" id="SSF52402">
    <property type="entry name" value="Adenine nucleotide alpha hydrolases-like"/>
    <property type="match status" value="1"/>
</dbReference>
<name>MNMA_CHLAD</name>
<accession>B8G5F1</accession>
<reference key="1">
    <citation type="submission" date="2008-12" db="EMBL/GenBank/DDBJ databases">
        <title>Complete sequence of Chloroflexus aggregans DSM 9485.</title>
        <authorList>
            <consortium name="US DOE Joint Genome Institute"/>
            <person name="Lucas S."/>
            <person name="Copeland A."/>
            <person name="Lapidus A."/>
            <person name="Glavina del Rio T."/>
            <person name="Dalin E."/>
            <person name="Tice H."/>
            <person name="Pitluck S."/>
            <person name="Foster B."/>
            <person name="Larimer F."/>
            <person name="Land M."/>
            <person name="Hauser L."/>
            <person name="Kyrpides N."/>
            <person name="Mikhailova N."/>
            <person name="Bryant D.A."/>
            <person name="Richardson P."/>
        </authorList>
    </citation>
    <scope>NUCLEOTIDE SEQUENCE [LARGE SCALE GENOMIC DNA]</scope>
    <source>
        <strain>MD-66 / DSM 9485</strain>
    </source>
</reference>
<feature type="chain" id="PRO_1000198605" description="tRNA-specific 2-thiouridylase MnmA">
    <location>
        <begin position="1"/>
        <end position="359"/>
    </location>
</feature>
<feature type="region of interest" description="Interaction with tRNA" evidence="1">
    <location>
        <begin position="148"/>
        <end position="150"/>
    </location>
</feature>
<feature type="active site" description="Nucleophile" evidence="1">
    <location>
        <position position="101"/>
    </location>
</feature>
<feature type="active site" description="Cysteine persulfide intermediate" evidence="1">
    <location>
        <position position="198"/>
    </location>
</feature>
<feature type="binding site" evidence="1">
    <location>
        <begin position="7"/>
        <end position="14"/>
    </location>
    <ligand>
        <name>ATP</name>
        <dbReference type="ChEBI" id="CHEBI:30616"/>
    </ligand>
</feature>
<feature type="binding site" evidence="1">
    <location>
        <position position="33"/>
    </location>
    <ligand>
        <name>ATP</name>
        <dbReference type="ChEBI" id="CHEBI:30616"/>
    </ligand>
</feature>
<feature type="binding site" evidence="1">
    <location>
        <position position="125"/>
    </location>
    <ligand>
        <name>ATP</name>
        <dbReference type="ChEBI" id="CHEBI:30616"/>
    </ligand>
</feature>
<feature type="site" description="Interaction with tRNA" evidence="1">
    <location>
        <position position="126"/>
    </location>
</feature>
<feature type="site" description="Interaction with tRNA" evidence="1">
    <location>
        <position position="337"/>
    </location>
</feature>
<feature type="disulfide bond" description="Alternate" evidence="1">
    <location>
        <begin position="101"/>
        <end position="198"/>
    </location>
</feature>